<evidence type="ECO:0000269" key="1">
    <source>
    </source>
</evidence>
<protein>
    <recommendedName>
        <fullName>Uncharacterized protein MXAN_7266</fullName>
    </recommendedName>
</protein>
<name>Y7266_MYXXD</name>
<accession>Q1CW44</accession>
<proteinExistence type="evidence at transcript level"/>
<gene>
    <name type="ordered locus">MXAN_7266</name>
</gene>
<dbReference type="EMBL" id="CP000113">
    <property type="protein sequence ID" value="ABF87166.1"/>
    <property type="molecule type" value="Genomic_DNA"/>
</dbReference>
<dbReference type="SMR" id="Q1CW44"/>
<dbReference type="STRING" id="246197.MXAN_7266"/>
<dbReference type="EnsemblBacteria" id="ABF87166">
    <property type="protein sequence ID" value="ABF87166"/>
    <property type="gene ID" value="MXAN_7266"/>
</dbReference>
<dbReference type="KEGG" id="mxa:MXAN_7266"/>
<dbReference type="HOGENOM" id="CLU_3292844_0_0_7"/>
<dbReference type="Proteomes" id="UP000002402">
    <property type="component" value="Chromosome"/>
</dbReference>
<comment type="developmental stage">
    <text>Operon expression begins by 6 hours after starvation has initiated development and is under strong negative regulation by DevS.</text>
</comment>
<comment type="induction">
    <text evidence="1">Part of an operon going from at least MXAN_7266 to MXAN_7259 that includes a CRISPR operon with transcription continuing into the pre-crRNA locus.</text>
</comment>
<sequence length="40" mass="4499">MSLRKSKYEVLERLEVGLRIVSLALVVAKTLVELVDTTLI</sequence>
<feature type="chain" id="PRO_0000418231" description="Uncharacterized protein MXAN_7266">
    <location>
        <begin position="1"/>
        <end position="40"/>
    </location>
</feature>
<organism>
    <name type="scientific">Myxococcus xanthus (strain DK1622)</name>
    <dbReference type="NCBI Taxonomy" id="246197"/>
    <lineage>
        <taxon>Bacteria</taxon>
        <taxon>Pseudomonadati</taxon>
        <taxon>Myxococcota</taxon>
        <taxon>Myxococcia</taxon>
        <taxon>Myxococcales</taxon>
        <taxon>Cystobacterineae</taxon>
        <taxon>Myxococcaceae</taxon>
        <taxon>Myxococcus</taxon>
    </lineage>
</organism>
<keyword id="KW-1185">Reference proteome</keyword>
<reference key="1">
    <citation type="journal article" date="2006" name="Proc. Natl. Acad. Sci. U.S.A.">
        <title>Evolution of sensory complexity recorded in a myxobacterial genome.</title>
        <authorList>
            <person name="Goldman B.S."/>
            <person name="Nierman W.C."/>
            <person name="Kaiser D."/>
            <person name="Slater S.C."/>
            <person name="Durkin A.S."/>
            <person name="Eisen J.A."/>
            <person name="Ronning C.M."/>
            <person name="Barbazuk W.B."/>
            <person name="Blanchard M."/>
            <person name="Field C."/>
            <person name="Halling C."/>
            <person name="Hinkle G."/>
            <person name="Iartchuk O."/>
            <person name="Kim H.S."/>
            <person name="Mackenzie C."/>
            <person name="Madupu R."/>
            <person name="Miller N."/>
            <person name="Shvartsbeyn A."/>
            <person name="Sullivan S.A."/>
            <person name="Vaudin M."/>
            <person name="Wiegand R."/>
            <person name="Kaplan H.B."/>
        </authorList>
    </citation>
    <scope>NUCLEOTIDE SEQUENCE [LARGE SCALE GENOMIC DNA]</scope>
    <source>
        <strain>DK1622</strain>
    </source>
</reference>
<reference key="2">
    <citation type="journal article" date="2007" name="J. Bacteriol.">
        <title>Regulation of dev, an operon that includes genes essential for Myxococcus xanthus development and CRISPR-associated genes and repeats.</title>
        <authorList>
            <person name="Viswanathan P."/>
            <person name="Murphy K."/>
            <person name="Julien B."/>
            <person name="Garza A.G."/>
            <person name="Kroos L."/>
        </authorList>
    </citation>
    <scope>INDUCTION</scope>
    <scope>OPERON STRUCTURE</scope>
    <source>
        <strain>DK1622</strain>
    </source>
</reference>